<reference key="1">
    <citation type="journal article" date="2004" name="J. Gen. Virol.">
        <title>Genetic content of wild-type human cytomegalovirus.</title>
        <authorList>
            <person name="Dolan A."/>
            <person name="Cunningham C."/>
            <person name="Hector R.D."/>
            <person name="Hassan-Walker A.F."/>
            <person name="Lee L."/>
            <person name="Addison C."/>
            <person name="Dargan D.J."/>
            <person name="McGeoch D.J."/>
            <person name="Gatherer D."/>
            <person name="Emery V.C."/>
            <person name="Griffiths P.D."/>
            <person name="Sinzger C."/>
            <person name="McSharry B.P."/>
            <person name="Wilkinson G.W.G."/>
            <person name="Davison A.J."/>
        </authorList>
    </citation>
    <scope>NUCLEOTIDE SEQUENCE [LARGE SCALE GENOMIC DNA]</scope>
</reference>
<sequence>MLRGDSAAKIQERYAELQKRKSHPTSCISTAFTNVAALCRKRYQMMHPELGLAHSCNEAFLPLMAFCGRHRDYNSPEESQRELLFHERLKSALDELTFRPCSEEQRASYQKLDALTELYRDPQFQQINNFMTDFKKWLDGGFSTAVEGDAKAIRLEPFQKNLLIHVIFFIAVTKIPVLANRVLQYLIHAFQIDFLSQTSIDIFKQKATVFLVPRRHGKTWFIIPIISFLLKHMIGISIGYVAHQKHVSQFVLKEVEFRCRHTFARDYVVENKDNVISIDHRGAKSTALFASCYNTNSIRGQNFHLLLVDEAHFIKKEAFNTILGFLAQNTTKIIFISSTNTTSDATCFLTRLNNAPFDMLNVVSYVCEEHLHSFTEKGDATACPCYRLHKPTFISLNSQVRKTANMFMPGAFMDEIIGGTNKISQNTVLITDQSREEFDILRYSTLNTNAYDYFGKTLYVYLDPAFTTNRKASGTGVAAVGAYRHQFLIYGLEHFFLRDLSESSEVAIAECAAHMIISVLSLHPYLDELRIAVEGNTNQAAAVRIACLIRQSVQSSTLIRVLFYHTPDQNHIEQPFYLMGRDKALAVEQFISRFNSGYIKASQELVSYTIKLSHDPIEYLLEQIQNLHRVTLAEGTTARYSAKRQNRISDDLIIAVIMATYLCDDIHAIRFRVS</sequence>
<accession>F5HCU8</accession>
<organismHost>
    <name type="scientific">Homo sapiens</name>
    <name type="common">Human</name>
    <dbReference type="NCBI Taxonomy" id="9606"/>
</organismHost>
<gene>
    <name evidence="1" type="primary">TRM3</name>
    <name type="ordered locus">UL89</name>
</gene>
<evidence type="ECO:0000255" key="1">
    <source>
        <dbReference type="HAMAP-Rule" id="MF_04013"/>
    </source>
</evidence>
<comment type="function">
    <text evidence="1">Component of the molecular motor that translocates viral genomic DNA in empty capsid during DNA packaging. Forms a tripartite terminase complex together with TRM1 and TRM2 in the host cytoplasm. Once the complex reaches the host nucleus, it interacts with the capsid portal vertex. This portal forms a ring in which genomic DNA is translocated into the capsid. TRM3 carries an RNase H-like nuclease activity that plays an important role for the cleavage of concatemeric viral DNA into unit length genomes.</text>
</comment>
<comment type="subunit">
    <text evidence="1">Interacts with the terminase subunits TRM1 and TRM2. Interacts with portal protein.</text>
</comment>
<comment type="subcellular location">
    <subcellularLocation>
        <location evidence="1">Host nucleus</location>
    </subcellularLocation>
    <text evidence="1">Responsible for the nuclear localization of the two others subunits TRM1 and TRM2.</text>
</comment>
<comment type="similarity">
    <text evidence="1">Belongs to the herpesviridae TRM3 protein family.</text>
</comment>
<feature type="chain" id="PRO_0000417832" description="Tripartite terminase subunit 3">
    <location>
        <begin position="1"/>
        <end position="674"/>
    </location>
</feature>
<feature type="short sequence motif" description="Walker A motif" evidence="1">
    <location>
        <begin position="212"/>
        <end position="219"/>
    </location>
</feature>
<feature type="short sequence motif" description="Walker B motif" evidence="1">
    <location>
        <begin position="305"/>
        <end position="310"/>
    </location>
</feature>
<feature type="active site" description="For ATPase activity" evidence="1">
    <location>
        <position position="310"/>
    </location>
</feature>
<feature type="active site" description="For nuclease activity" evidence="1">
    <location>
        <position position="463"/>
    </location>
</feature>
<feature type="active site" description="For nuclease activity" evidence="1">
    <location>
        <position position="534"/>
    </location>
</feature>
<feature type="active site" description="For nuclease activity" evidence="1">
    <location>
        <position position="651"/>
    </location>
</feature>
<keyword id="KW-0238">DNA-binding</keyword>
<keyword id="KW-1048">Host nucleus</keyword>
<keyword id="KW-0378">Hydrolase</keyword>
<keyword id="KW-1185">Reference proteome</keyword>
<keyword id="KW-0231">Viral genome packaging</keyword>
<keyword id="KW-1188">Viral release from host cell</keyword>
<protein>
    <recommendedName>
        <fullName evidence="1">Tripartite terminase subunit 3</fullName>
        <ecNumber evidence="1">3.1.-.-</ecNumber>
    </recommendedName>
    <alternativeName>
        <fullName evidence="1">Terminase large subunit</fullName>
    </alternativeName>
</protein>
<organism>
    <name type="scientific">Human cytomegalovirus (strain Merlin)</name>
    <name type="common">HHV-5</name>
    <name type="synonym">Human herpesvirus 5</name>
    <dbReference type="NCBI Taxonomy" id="295027"/>
    <lineage>
        <taxon>Viruses</taxon>
        <taxon>Duplodnaviria</taxon>
        <taxon>Heunggongvirae</taxon>
        <taxon>Peploviricota</taxon>
        <taxon>Herviviricetes</taxon>
        <taxon>Herpesvirales</taxon>
        <taxon>Orthoherpesviridae</taxon>
        <taxon>Betaherpesvirinae</taxon>
        <taxon>Cytomegalovirus</taxon>
        <taxon>Cytomegalovirus humanbeta5</taxon>
        <taxon>Human cytomegalovirus</taxon>
    </lineage>
</organism>
<proteinExistence type="inferred from homology"/>
<name>TRM3_HCMVM</name>
<dbReference type="EC" id="3.1.-.-" evidence="1"/>
<dbReference type="EMBL" id="AY446894">
    <property type="protein sequence ID" value="AAR31641.1"/>
    <property type="molecule type" value="Genomic_DNA"/>
</dbReference>
<dbReference type="RefSeq" id="YP_081537.1">
    <property type="nucleotide sequence ID" value="NC_006273.2"/>
</dbReference>
<dbReference type="BMRB" id="F5HCU8"/>
<dbReference type="SMR" id="F5HCU8"/>
<dbReference type="DrugBank" id="DB12070">
    <property type="generic name" value="Letermovir"/>
</dbReference>
<dbReference type="DrugCentral" id="F5HCU8"/>
<dbReference type="GeneID" id="3077553"/>
<dbReference type="KEGG" id="vg:3077553"/>
<dbReference type="Reactome" id="R-HSA-9610379">
    <property type="pathway name" value="HCMV Late Events"/>
</dbReference>
<dbReference type="Proteomes" id="UP000000938">
    <property type="component" value="Segment"/>
</dbReference>
<dbReference type="GO" id="GO:0042025">
    <property type="term" value="C:host cell nucleus"/>
    <property type="evidence" value="ECO:0007669"/>
    <property type="project" value="UniProtKB-SubCell"/>
</dbReference>
<dbReference type="GO" id="GO:0003677">
    <property type="term" value="F:DNA binding"/>
    <property type="evidence" value="ECO:0007669"/>
    <property type="project" value="UniProtKB-KW"/>
</dbReference>
<dbReference type="GO" id="GO:0016787">
    <property type="term" value="F:hydrolase activity"/>
    <property type="evidence" value="ECO:0007669"/>
    <property type="project" value="UniProtKB-KW"/>
</dbReference>
<dbReference type="GO" id="GO:0051276">
    <property type="term" value="P:chromosome organization"/>
    <property type="evidence" value="ECO:0007669"/>
    <property type="project" value="InterPro"/>
</dbReference>
<dbReference type="Gene3D" id="3.30.420.320">
    <property type="match status" value="1"/>
</dbReference>
<dbReference type="Gene3D" id="3.40.50.300">
    <property type="entry name" value="P-loop containing nucleotide triphosphate hydrolases"/>
    <property type="match status" value="1"/>
</dbReference>
<dbReference type="HAMAP" id="MF_04013">
    <property type="entry name" value="HSV_TRM3"/>
    <property type="match status" value="1"/>
</dbReference>
<dbReference type="InterPro" id="IPR003498">
    <property type="entry name" value="DNA_pack_C"/>
</dbReference>
<dbReference type="InterPro" id="IPR038435">
    <property type="entry name" value="DNA_pack_C_sf"/>
</dbReference>
<dbReference type="InterPro" id="IPR003499">
    <property type="entry name" value="DNA_pack_N"/>
</dbReference>
<dbReference type="InterPro" id="IPR033663">
    <property type="entry name" value="HSV_TRM3"/>
</dbReference>
<dbReference type="InterPro" id="IPR027417">
    <property type="entry name" value="P-loop_NTPase"/>
</dbReference>
<dbReference type="Pfam" id="PF02499">
    <property type="entry name" value="DNA_pack_C"/>
    <property type="match status" value="1"/>
</dbReference>
<dbReference type="Pfam" id="PF02500">
    <property type="entry name" value="DNA_pack_N"/>
    <property type="match status" value="1"/>
</dbReference>
<dbReference type="SUPFAM" id="SSF52540">
    <property type="entry name" value="P-loop containing nucleoside triphosphate hydrolases"/>
    <property type="match status" value="1"/>
</dbReference>